<comment type="catalytic activity">
    <reaction evidence="1">
        <text>2-formamido-N(1)-(5-O-phospho-beta-D-ribosyl)acetamidine + ATP = 5-amino-1-(5-phospho-beta-D-ribosyl)imidazole + ADP + phosphate + H(+)</text>
        <dbReference type="Rhea" id="RHEA:23032"/>
        <dbReference type="ChEBI" id="CHEBI:15378"/>
        <dbReference type="ChEBI" id="CHEBI:30616"/>
        <dbReference type="ChEBI" id="CHEBI:43474"/>
        <dbReference type="ChEBI" id="CHEBI:137981"/>
        <dbReference type="ChEBI" id="CHEBI:147287"/>
        <dbReference type="ChEBI" id="CHEBI:456216"/>
        <dbReference type="EC" id="6.3.3.1"/>
    </reaction>
</comment>
<comment type="pathway">
    <text evidence="1">Purine metabolism; IMP biosynthesis via de novo pathway; 5-amino-1-(5-phospho-D-ribosyl)imidazole from N(2)-formyl-N(1)-(5-phospho-D-ribosyl)glycinamide: step 2/2.</text>
</comment>
<comment type="subcellular location">
    <subcellularLocation>
        <location evidence="1">Cytoplasm</location>
    </subcellularLocation>
</comment>
<comment type="similarity">
    <text evidence="1">Belongs to the AIR synthase family.</text>
</comment>
<protein>
    <recommendedName>
        <fullName evidence="1">Phosphoribosylformylglycinamidine cyclo-ligase</fullName>
        <ecNumber evidence="1">6.3.3.1</ecNumber>
    </recommendedName>
    <alternativeName>
        <fullName evidence="1">AIR synthase</fullName>
    </alternativeName>
    <alternativeName>
        <fullName evidence="1">AIRS</fullName>
    </alternativeName>
    <alternativeName>
        <fullName evidence="1">Phosphoribosyl-aminoimidazole synthetase</fullName>
    </alternativeName>
</protein>
<feature type="chain" id="PRO_1000193020" description="Phosphoribosylformylglycinamidine cyclo-ligase">
    <location>
        <begin position="1"/>
        <end position="345"/>
    </location>
</feature>
<accession>B7MHY0</accession>
<keyword id="KW-0067">ATP-binding</keyword>
<keyword id="KW-0963">Cytoplasm</keyword>
<keyword id="KW-0436">Ligase</keyword>
<keyword id="KW-0547">Nucleotide-binding</keyword>
<keyword id="KW-0658">Purine biosynthesis</keyword>
<keyword id="KW-1185">Reference proteome</keyword>
<name>PUR5_ECO45</name>
<organism>
    <name type="scientific">Escherichia coli O45:K1 (strain S88 / ExPEC)</name>
    <dbReference type="NCBI Taxonomy" id="585035"/>
    <lineage>
        <taxon>Bacteria</taxon>
        <taxon>Pseudomonadati</taxon>
        <taxon>Pseudomonadota</taxon>
        <taxon>Gammaproteobacteria</taxon>
        <taxon>Enterobacterales</taxon>
        <taxon>Enterobacteriaceae</taxon>
        <taxon>Escherichia</taxon>
    </lineage>
</organism>
<evidence type="ECO:0000255" key="1">
    <source>
        <dbReference type="HAMAP-Rule" id="MF_00741"/>
    </source>
</evidence>
<reference key="1">
    <citation type="journal article" date="2009" name="PLoS Genet.">
        <title>Organised genome dynamics in the Escherichia coli species results in highly diverse adaptive paths.</title>
        <authorList>
            <person name="Touchon M."/>
            <person name="Hoede C."/>
            <person name="Tenaillon O."/>
            <person name="Barbe V."/>
            <person name="Baeriswyl S."/>
            <person name="Bidet P."/>
            <person name="Bingen E."/>
            <person name="Bonacorsi S."/>
            <person name="Bouchier C."/>
            <person name="Bouvet O."/>
            <person name="Calteau A."/>
            <person name="Chiapello H."/>
            <person name="Clermont O."/>
            <person name="Cruveiller S."/>
            <person name="Danchin A."/>
            <person name="Diard M."/>
            <person name="Dossat C."/>
            <person name="Karoui M.E."/>
            <person name="Frapy E."/>
            <person name="Garry L."/>
            <person name="Ghigo J.M."/>
            <person name="Gilles A.M."/>
            <person name="Johnson J."/>
            <person name="Le Bouguenec C."/>
            <person name="Lescat M."/>
            <person name="Mangenot S."/>
            <person name="Martinez-Jehanne V."/>
            <person name="Matic I."/>
            <person name="Nassif X."/>
            <person name="Oztas S."/>
            <person name="Petit M.A."/>
            <person name="Pichon C."/>
            <person name="Rouy Z."/>
            <person name="Ruf C.S."/>
            <person name="Schneider D."/>
            <person name="Tourret J."/>
            <person name="Vacherie B."/>
            <person name="Vallenet D."/>
            <person name="Medigue C."/>
            <person name="Rocha E.P.C."/>
            <person name="Denamur E."/>
        </authorList>
    </citation>
    <scope>NUCLEOTIDE SEQUENCE [LARGE SCALE GENOMIC DNA]</scope>
    <source>
        <strain>S88 / ExPEC</strain>
    </source>
</reference>
<sequence length="345" mass="36902">MTDKTSLSYKDAGVDIDAGNALVGRIKGVVKKTRRPEVMGGLGGFGALCALPQKYREPVLVSGTDGVGTKLRLAMDLKRHDTIGIDLVAMCVNDLVVQGAEPLFFLDYYATGKLDVNTASAVISGIAEGCLQSGCSLVGGETAEMPGMYHGEDYDVAGFCVGVVEKSEIIDGSKVSDGDVLIALGSSGPHSNGYSLVRKILEVSGCDPQTTELDGKPLADHLLAPTRIYVKSVLELIEKVDVHAIAHLTGGGFWENIPRVLPDNTQAVIDESSWQWPEVFNWLQTAGNVERHEMYRTFNCGVGMIIALPAPEVDKALALLNANGENAWKIGIIKTSDSEQRVVIE</sequence>
<proteinExistence type="inferred from homology"/>
<dbReference type="EC" id="6.3.3.1" evidence="1"/>
<dbReference type="EMBL" id="CU928161">
    <property type="protein sequence ID" value="CAR03938.1"/>
    <property type="molecule type" value="Genomic_DNA"/>
</dbReference>
<dbReference type="RefSeq" id="WP_001350863.1">
    <property type="nucleotide sequence ID" value="NC_011742.1"/>
</dbReference>
<dbReference type="SMR" id="B7MHY0"/>
<dbReference type="KEGG" id="ecz:ECS88_2671"/>
<dbReference type="HOGENOM" id="CLU_047116_0_0_6"/>
<dbReference type="UniPathway" id="UPA00074">
    <property type="reaction ID" value="UER00129"/>
</dbReference>
<dbReference type="Proteomes" id="UP000000747">
    <property type="component" value="Chromosome"/>
</dbReference>
<dbReference type="GO" id="GO:0005829">
    <property type="term" value="C:cytosol"/>
    <property type="evidence" value="ECO:0007669"/>
    <property type="project" value="TreeGrafter"/>
</dbReference>
<dbReference type="GO" id="GO:0005524">
    <property type="term" value="F:ATP binding"/>
    <property type="evidence" value="ECO:0007669"/>
    <property type="project" value="UniProtKB-KW"/>
</dbReference>
<dbReference type="GO" id="GO:0004637">
    <property type="term" value="F:phosphoribosylamine-glycine ligase activity"/>
    <property type="evidence" value="ECO:0007669"/>
    <property type="project" value="TreeGrafter"/>
</dbReference>
<dbReference type="GO" id="GO:0004641">
    <property type="term" value="F:phosphoribosylformylglycinamidine cyclo-ligase activity"/>
    <property type="evidence" value="ECO:0007669"/>
    <property type="project" value="UniProtKB-UniRule"/>
</dbReference>
<dbReference type="GO" id="GO:0006189">
    <property type="term" value="P:'de novo' IMP biosynthetic process"/>
    <property type="evidence" value="ECO:0007669"/>
    <property type="project" value="UniProtKB-UniRule"/>
</dbReference>
<dbReference type="GO" id="GO:0046084">
    <property type="term" value="P:adenine biosynthetic process"/>
    <property type="evidence" value="ECO:0007669"/>
    <property type="project" value="TreeGrafter"/>
</dbReference>
<dbReference type="CDD" id="cd02196">
    <property type="entry name" value="PurM"/>
    <property type="match status" value="1"/>
</dbReference>
<dbReference type="FunFam" id="3.30.1330.10:FF:000001">
    <property type="entry name" value="Phosphoribosylformylglycinamidine cyclo-ligase"/>
    <property type="match status" value="1"/>
</dbReference>
<dbReference type="FunFam" id="3.90.650.10:FF:000001">
    <property type="entry name" value="Phosphoribosylformylglycinamidine cyclo-ligase"/>
    <property type="match status" value="1"/>
</dbReference>
<dbReference type="Gene3D" id="3.90.650.10">
    <property type="entry name" value="PurM-like C-terminal domain"/>
    <property type="match status" value="1"/>
</dbReference>
<dbReference type="Gene3D" id="3.30.1330.10">
    <property type="entry name" value="PurM-like, N-terminal domain"/>
    <property type="match status" value="1"/>
</dbReference>
<dbReference type="HAMAP" id="MF_00741">
    <property type="entry name" value="AIRS"/>
    <property type="match status" value="1"/>
</dbReference>
<dbReference type="InterPro" id="IPR010918">
    <property type="entry name" value="PurM-like_C_dom"/>
</dbReference>
<dbReference type="InterPro" id="IPR036676">
    <property type="entry name" value="PurM-like_C_sf"/>
</dbReference>
<dbReference type="InterPro" id="IPR016188">
    <property type="entry name" value="PurM-like_N"/>
</dbReference>
<dbReference type="InterPro" id="IPR036921">
    <property type="entry name" value="PurM-like_N_sf"/>
</dbReference>
<dbReference type="InterPro" id="IPR004733">
    <property type="entry name" value="PurM_cligase"/>
</dbReference>
<dbReference type="NCBIfam" id="TIGR00878">
    <property type="entry name" value="purM"/>
    <property type="match status" value="1"/>
</dbReference>
<dbReference type="PANTHER" id="PTHR10520:SF12">
    <property type="entry name" value="TRIFUNCTIONAL PURINE BIOSYNTHETIC PROTEIN ADENOSINE-3"/>
    <property type="match status" value="1"/>
</dbReference>
<dbReference type="PANTHER" id="PTHR10520">
    <property type="entry name" value="TRIFUNCTIONAL PURINE BIOSYNTHETIC PROTEIN ADENOSINE-3-RELATED"/>
    <property type="match status" value="1"/>
</dbReference>
<dbReference type="Pfam" id="PF00586">
    <property type="entry name" value="AIRS"/>
    <property type="match status" value="1"/>
</dbReference>
<dbReference type="Pfam" id="PF02769">
    <property type="entry name" value="AIRS_C"/>
    <property type="match status" value="1"/>
</dbReference>
<dbReference type="SUPFAM" id="SSF56042">
    <property type="entry name" value="PurM C-terminal domain-like"/>
    <property type="match status" value="1"/>
</dbReference>
<dbReference type="SUPFAM" id="SSF55326">
    <property type="entry name" value="PurM N-terminal domain-like"/>
    <property type="match status" value="1"/>
</dbReference>
<gene>
    <name evidence="1" type="primary">purM</name>
    <name type="ordered locus">ECS88_2671</name>
</gene>